<keyword id="KW-0963">Cytoplasm</keyword>
<keyword id="KW-0238">DNA-binding</keyword>
<keyword id="KW-0677">Repeat</keyword>
<keyword id="KW-0804">Transcription</keyword>
<keyword id="KW-0805">Transcription regulation</keyword>
<protein>
    <recommendedName>
        <fullName>Transcriptional regulator MraZ</fullName>
    </recommendedName>
</protein>
<organism>
    <name type="scientific">Clavibacter michiganensis subsp. michiganensis (strain NCPPB 382)</name>
    <dbReference type="NCBI Taxonomy" id="443906"/>
    <lineage>
        <taxon>Bacteria</taxon>
        <taxon>Bacillati</taxon>
        <taxon>Actinomycetota</taxon>
        <taxon>Actinomycetes</taxon>
        <taxon>Micrococcales</taxon>
        <taxon>Microbacteriaceae</taxon>
        <taxon>Clavibacter</taxon>
    </lineage>
</organism>
<feature type="chain" id="PRO_1000062864" description="Transcriptional regulator MraZ">
    <location>
        <begin position="1"/>
        <end position="143"/>
    </location>
</feature>
<feature type="domain" description="SpoVT-AbrB 1" evidence="2">
    <location>
        <begin position="5"/>
        <end position="47"/>
    </location>
</feature>
<feature type="domain" description="SpoVT-AbrB 2" evidence="2">
    <location>
        <begin position="76"/>
        <end position="119"/>
    </location>
</feature>
<dbReference type="EMBL" id="AM711867">
    <property type="protein sequence ID" value="CAN01924.1"/>
    <property type="molecule type" value="Genomic_DNA"/>
</dbReference>
<dbReference type="RefSeq" id="WP_012038555.1">
    <property type="nucleotide sequence ID" value="NC_009480.1"/>
</dbReference>
<dbReference type="SMR" id="A5CS60"/>
<dbReference type="GeneID" id="92983634"/>
<dbReference type="KEGG" id="cmi:CMM_1868"/>
<dbReference type="eggNOG" id="COG2001">
    <property type="taxonomic scope" value="Bacteria"/>
</dbReference>
<dbReference type="HOGENOM" id="CLU_107907_0_5_11"/>
<dbReference type="OrthoDB" id="9807753at2"/>
<dbReference type="Proteomes" id="UP000001564">
    <property type="component" value="Chromosome"/>
</dbReference>
<dbReference type="GO" id="GO:0005737">
    <property type="term" value="C:cytoplasm"/>
    <property type="evidence" value="ECO:0007669"/>
    <property type="project" value="UniProtKB-UniRule"/>
</dbReference>
<dbReference type="GO" id="GO:0009295">
    <property type="term" value="C:nucleoid"/>
    <property type="evidence" value="ECO:0007669"/>
    <property type="project" value="UniProtKB-SubCell"/>
</dbReference>
<dbReference type="GO" id="GO:0003700">
    <property type="term" value="F:DNA-binding transcription factor activity"/>
    <property type="evidence" value="ECO:0007669"/>
    <property type="project" value="UniProtKB-UniRule"/>
</dbReference>
<dbReference type="GO" id="GO:0000976">
    <property type="term" value="F:transcription cis-regulatory region binding"/>
    <property type="evidence" value="ECO:0007669"/>
    <property type="project" value="TreeGrafter"/>
</dbReference>
<dbReference type="GO" id="GO:2000143">
    <property type="term" value="P:negative regulation of DNA-templated transcription initiation"/>
    <property type="evidence" value="ECO:0007669"/>
    <property type="project" value="TreeGrafter"/>
</dbReference>
<dbReference type="CDD" id="cd16321">
    <property type="entry name" value="MraZ_C"/>
    <property type="match status" value="1"/>
</dbReference>
<dbReference type="CDD" id="cd16320">
    <property type="entry name" value="MraZ_N"/>
    <property type="match status" value="1"/>
</dbReference>
<dbReference type="Gene3D" id="3.40.1550.20">
    <property type="entry name" value="Transcriptional regulator MraZ domain"/>
    <property type="match status" value="1"/>
</dbReference>
<dbReference type="HAMAP" id="MF_01008">
    <property type="entry name" value="MraZ"/>
    <property type="match status" value="1"/>
</dbReference>
<dbReference type="InterPro" id="IPR003444">
    <property type="entry name" value="MraZ"/>
</dbReference>
<dbReference type="InterPro" id="IPR035644">
    <property type="entry name" value="MraZ_C"/>
</dbReference>
<dbReference type="InterPro" id="IPR020603">
    <property type="entry name" value="MraZ_dom"/>
</dbReference>
<dbReference type="InterPro" id="IPR035642">
    <property type="entry name" value="MraZ_N"/>
</dbReference>
<dbReference type="InterPro" id="IPR038619">
    <property type="entry name" value="MraZ_sf"/>
</dbReference>
<dbReference type="InterPro" id="IPR007159">
    <property type="entry name" value="SpoVT-AbrB_dom"/>
</dbReference>
<dbReference type="InterPro" id="IPR037914">
    <property type="entry name" value="SpoVT-AbrB_sf"/>
</dbReference>
<dbReference type="NCBIfam" id="TIGR00242">
    <property type="entry name" value="division/cell wall cluster transcriptional repressor MraZ"/>
    <property type="match status" value="1"/>
</dbReference>
<dbReference type="PANTHER" id="PTHR34701">
    <property type="entry name" value="TRANSCRIPTIONAL REGULATOR MRAZ"/>
    <property type="match status" value="1"/>
</dbReference>
<dbReference type="PANTHER" id="PTHR34701:SF1">
    <property type="entry name" value="TRANSCRIPTIONAL REGULATOR MRAZ"/>
    <property type="match status" value="1"/>
</dbReference>
<dbReference type="Pfam" id="PF02381">
    <property type="entry name" value="MraZ"/>
    <property type="match status" value="2"/>
</dbReference>
<dbReference type="SUPFAM" id="SSF89447">
    <property type="entry name" value="AbrB/MazE/MraZ-like"/>
    <property type="match status" value="1"/>
</dbReference>
<dbReference type="PROSITE" id="PS51740">
    <property type="entry name" value="SPOVT_ABRB"/>
    <property type="match status" value="2"/>
</dbReference>
<sequence>MFLGTHSPRLDDKGRLILPAKFRDELEGGVVMTRGQDRCIYVFTTREFEELHDRMRQAPLASKQARDYMRVFLSGANAETPDKQHRITIPQALRTYAGLDRELAVIGAGSRVEIWDAGTWDEYLTANESAFADTAEEVIPGLF</sequence>
<proteinExistence type="inferred from homology"/>
<evidence type="ECO:0000255" key="1">
    <source>
        <dbReference type="HAMAP-Rule" id="MF_01008"/>
    </source>
</evidence>
<evidence type="ECO:0000255" key="2">
    <source>
        <dbReference type="PROSITE-ProRule" id="PRU01076"/>
    </source>
</evidence>
<comment type="subunit">
    <text evidence="1">Forms oligomers.</text>
</comment>
<comment type="subcellular location">
    <subcellularLocation>
        <location evidence="1">Cytoplasm</location>
        <location evidence="1">Nucleoid</location>
    </subcellularLocation>
</comment>
<comment type="similarity">
    <text evidence="1">Belongs to the MraZ family.</text>
</comment>
<accession>A5CS60</accession>
<name>MRAZ_CLAM3</name>
<gene>
    <name evidence="1" type="primary">mraZ</name>
    <name type="ordered locus">CMM_1868</name>
</gene>
<reference key="1">
    <citation type="journal article" date="2008" name="J. Bacteriol.">
        <title>The genome sequence of the tomato-pathogenic actinomycete Clavibacter michiganensis subsp. michiganensis NCPPB382 reveals a large island involved in pathogenicity.</title>
        <authorList>
            <person name="Gartemann K.-H."/>
            <person name="Abt B."/>
            <person name="Bekel T."/>
            <person name="Burger A."/>
            <person name="Engemann J."/>
            <person name="Fluegel M."/>
            <person name="Gaigalat L."/>
            <person name="Goesmann A."/>
            <person name="Graefen I."/>
            <person name="Kalinowski J."/>
            <person name="Kaup O."/>
            <person name="Kirchner O."/>
            <person name="Krause L."/>
            <person name="Linke B."/>
            <person name="McHardy A."/>
            <person name="Meyer F."/>
            <person name="Pohle S."/>
            <person name="Rueckert C."/>
            <person name="Schneiker S."/>
            <person name="Zellermann E.-M."/>
            <person name="Puehler A."/>
            <person name="Eichenlaub R."/>
            <person name="Kaiser O."/>
            <person name="Bartels D."/>
        </authorList>
    </citation>
    <scope>NUCLEOTIDE SEQUENCE [LARGE SCALE GENOMIC DNA]</scope>
    <source>
        <strain>NCPPB 382</strain>
    </source>
</reference>